<reference key="1">
    <citation type="journal article" date="2005" name="Nature">
        <title>The genome of the social amoeba Dictyostelium discoideum.</title>
        <authorList>
            <person name="Eichinger L."/>
            <person name="Pachebat J.A."/>
            <person name="Gloeckner G."/>
            <person name="Rajandream M.A."/>
            <person name="Sucgang R."/>
            <person name="Berriman M."/>
            <person name="Song J."/>
            <person name="Olsen R."/>
            <person name="Szafranski K."/>
            <person name="Xu Q."/>
            <person name="Tunggal B."/>
            <person name="Kummerfeld S."/>
            <person name="Madera M."/>
            <person name="Konfortov B.A."/>
            <person name="Rivero F."/>
            <person name="Bankier A.T."/>
            <person name="Lehmann R."/>
            <person name="Hamlin N."/>
            <person name="Davies R."/>
            <person name="Gaudet P."/>
            <person name="Fey P."/>
            <person name="Pilcher K."/>
            <person name="Chen G."/>
            <person name="Saunders D."/>
            <person name="Sodergren E.J."/>
            <person name="Davis P."/>
            <person name="Kerhornou A."/>
            <person name="Nie X."/>
            <person name="Hall N."/>
            <person name="Anjard C."/>
            <person name="Hemphill L."/>
            <person name="Bason N."/>
            <person name="Farbrother P."/>
            <person name="Desany B."/>
            <person name="Just E."/>
            <person name="Morio T."/>
            <person name="Rost R."/>
            <person name="Churcher C.M."/>
            <person name="Cooper J."/>
            <person name="Haydock S."/>
            <person name="van Driessche N."/>
            <person name="Cronin A."/>
            <person name="Goodhead I."/>
            <person name="Muzny D.M."/>
            <person name="Mourier T."/>
            <person name="Pain A."/>
            <person name="Lu M."/>
            <person name="Harper D."/>
            <person name="Lindsay R."/>
            <person name="Hauser H."/>
            <person name="James K.D."/>
            <person name="Quiles M."/>
            <person name="Madan Babu M."/>
            <person name="Saito T."/>
            <person name="Buchrieser C."/>
            <person name="Wardroper A."/>
            <person name="Felder M."/>
            <person name="Thangavelu M."/>
            <person name="Johnson D."/>
            <person name="Knights A."/>
            <person name="Loulseged H."/>
            <person name="Mungall K.L."/>
            <person name="Oliver K."/>
            <person name="Price C."/>
            <person name="Quail M.A."/>
            <person name="Urushihara H."/>
            <person name="Hernandez J."/>
            <person name="Rabbinowitsch E."/>
            <person name="Steffen D."/>
            <person name="Sanders M."/>
            <person name="Ma J."/>
            <person name="Kohara Y."/>
            <person name="Sharp S."/>
            <person name="Simmonds M.N."/>
            <person name="Spiegler S."/>
            <person name="Tivey A."/>
            <person name="Sugano S."/>
            <person name="White B."/>
            <person name="Walker D."/>
            <person name="Woodward J.R."/>
            <person name="Winckler T."/>
            <person name="Tanaka Y."/>
            <person name="Shaulsky G."/>
            <person name="Schleicher M."/>
            <person name="Weinstock G.M."/>
            <person name="Rosenthal A."/>
            <person name="Cox E.C."/>
            <person name="Chisholm R.L."/>
            <person name="Gibbs R.A."/>
            <person name="Loomis W.F."/>
            <person name="Platzer M."/>
            <person name="Kay R.R."/>
            <person name="Williams J.G."/>
            <person name="Dear P.H."/>
            <person name="Noegel A.A."/>
            <person name="Barrell B.G."/>
            <person name="Kuspa A."/>
        </authorList>
    </citation>
    <scope>NUCLEOTIDE SEQUENCE [LARGE SCALE GENOMIC DNA]</scope>
    <source>
        <strain>AX4</strain>
    </source>
</reference>
<sequence>MNNLIKGISNVTLRCVSQTSATSTSLFYIPSITRCLTKKCYGNKSTTILNSRINNNNNVNIRQQSTTAASTNIFQQALKETKQEQGEEKVKVEDNKIVRVSLQKLGYSEWKLMALFKALSGLSLREAMAQLSFTEHSPSKKLRGLIKHAAHVAENIKGMDPERLIISQIWAGRSFYKRSIMWKGRGQGSTIRKPFCHVSVEIKESEFKDGEKKVGKFGKTNKTFSKYDGNFDHTKEY</sequence>
<evidence type="ECO:0000250" key="1"/>
<evidence type="ECO:0000255" key="2"/>
<evidence type="ECO:0000305" key="3"/>
<keyword id="KW-0496">Mitochondrion</keyword>
<keyword id="KW-1185">Reference proteome</keyword>
<keyword id="KW-0687">Ribonucleoprotein</keyword>
<keyword id="KW-0689">Ribosomal protein</keyword>
<keyword id="KW-0809">Transit peptide</keyword>
<comment type="subcellular location">
    <subcellularLocation>
        <location evidence="1">Mitochondrion</location>
    </subcellularLocation>
</comment>
<comment type="similarity">
    <text evidence="3">Belongs to the universal ribosomal protein uL22 family.</text>
</comment>
<gene>
    <name type="primary">mrpl22</name>
    <name type="ORF">DDB_G0279519</name>
</gene>
<proteinExistence type="inferred from homology"/>
<organism>
    <name type="scientific">Dictyostelium discoideum</name>
    <name type="common">Social amoeba</name>
    <dbReference type="NCBI Taxonomy" id="44689"/>
    <lineage>
        <taxon>Eukaryota</taxon>
        <taxon>Amoebozoa</taxon>
        <taxon>Evosea</taxon>
        <taxon>Eumycetozoa</taxon>
        <taxon>Dictyostelia</taxon>
        <taxon>Dictyosteliales</taxon>
        <taxon>Dictyosteliaceae</taxon>
        <taxon>Dictyostelium</taxon>
    </lineage>
</organism>
<name>RM22_DICDI</name>
<dbReference type="EMBL" id="AAFI02000031">
    <property type="protein sequence ID" value="EAL67698.1"/>
    <property type="molecule type" value="Genomic_DNA"/>
</dbReference>
<dbReference type="RefSeq" id="XP_641674.1">
    <property type="nucleotide sequence ID" value="XM_636582.1"/>
</dbReference>
<dbReference type="SMR" id="Q54WP3"/>
<dbReference type="FunCoup" id="Q54WP3">
    <property type="interactions" value="218"/>
</dbReference>
<dbReference type="STRING" id="44689.Q54WP3"/>
<dbReference type="PaxDb" id="44689-DDB0267022"/>
<dbReference type="EnsemblProtists" id="EAL67698">
    <property type="protein sequence ID" value="EAL67698"/>
    <property type="gene ID" value="DDB_G0279519"/>
</dbReference>
<dbReference type="GeneID" id="8622082"/>
<dbReference type="KEGG" id="ddi:DDB_G0279519"/>
<dbReference type="dictyBase" id="DDB_G0279519">
    <property type="gene designation" value="mrpl22"/>
</dbReference>
<dbReference type="VEuPathDB" id="AmoebaDB:DDB_G0279519"/>
<dbReference type="eggNOG" id="KOG1711">
    <property type="taxonomic scope" value="Eukaryota"/>
</dbReference>
<dbReference type="HOGENOM" id="CLU_1172510_0_0_1"/>
<dbReference type="InParanoid" id="Q54WP3"/>
<dbReference type="OMA" id="THAKYDG"/>
<dbReference type="PhylomeDB" id="Q54WP3"/>
<dbReference type="PRO" id="PR:Q54WP3"/>
<dbReference type="Proteomes" id="UP000002195">
    <property type="component" value="Chromosome 3"/>
</dbReference>
<dbReference type="GO" id="GO:0015934">
    <property type="term" value="C:large ribosomal subunit"/>
    <property type="evidence" value="ECO:0000318"/>
    <property type="project" value="GO_Central"/>
</dbReference>
<dbReference type="GO" id="GO:0005739">
    <property type="term" value="C:mitochondrion"/>
    <property type="evidence" value="ECO:0000250"/>
    <property type="project" value="UniProtKB"/>
</dbReference>
<dbReference type="GO" id="GO:0003735">
    <property type="term" value="F:structural constituent of ribosome"/>
    <property type="evidence" value="ECO:0000318"/>
    <property type="project" value="GO_Central"/>
</dbReference>
<dbReference type="GO" id="GO:0006412">
    <property type="term" value="P:translation"/>
    <property type="evidence" value="ECO:0000318"/>
    <property type="project" value="GO_Central"/>
</dbReference>
<dbReference type="FunFam" id="3.90.470.10:FF:000033">
    <property type="entry name" value="Probable 39S ribosomal protein L22, mitochondrial"/>
    <property type="match status" value="1"/>
</dbReference>
<dbReference type="Gene3D" id="3.90.470.10">
    <property type="entry name" value="Ribosomal protein L22/L17"/>
    <property type="match status" value="1"/>
</dbReference>
<dbReference type="InterPro" id="IPR001063">
    <property type="entry name" value="Ribosomal_uL22"/>
</dbReference>
<dbReference type="InterPro" id="IPR047867">
    <property type="entry name" value="Ribosomal_uL22_bac/org-type"/>
</dbReference>
<dbReference type="InterPro" id="IPR036394">
    <property type="entry name" value="Ribosomal_uL22_sf"/>
</dbReference>
<dbReference type="PANTHER" id="PTHR13501">
    <property type="entry name" value="CHLOROPLAST 50S RIBOSOMAL PROTEIN L22-RELATED"/>
    <property type="match status" value="1"/>
</dbReference>
<dbReference type="PANTHER" id="PTHR13501:SF10">
    <property type="entry name" value="LARGE RIBOSOMAL SUBUNIT PROTEIN UL22M"/>
    <property type="match status" value="1"/>
</dbReference>
<dbReference type="Pfam" id="PF00237">
    <property type="entry name" value="Ribosomal_L22"/>
    <property type="match status" value="1"/>
</dbReference>
<dbReference type="SUPFAM" id="SSF54843">
    <property type="entry name" value="Ribosomal protein L22"/>
    <property type="match status" value="1"/>
</dbReference>
<protein>
    <recommendedName>
        <fullName evidence="3">Large ribosomal subunit protein uL22m</fullName>
    </recommendedName>
    <alternativeName>
        <fullName evidence="3">39S ribosomal protein L22, mitochondrial</fullName>
        <shortName>L22mt</shortName>
        <shortName>MRP-L22</shortName>
    </alternativeName>
</protein>
<accession>Q54WP3</accession>
<feature type="transit peptide" description="Mitochondrion" evidence="2">
    <location>
        <begin position="1"/>
        <end status="unknown"/>
    </location>
</feature>
<feature type="chain" id="PRO_0000323419" description="Large ribosomal subunit protein uL22m">
    <location>
        <begin status="unknown"/>
        <end position="237"/>
    </location>
</feature>